<proteinExistence type="evidence at protein level"/>
<accession>P04392</accession>
<gene>
    <name evidence="7" type="primary">DAM</name>
</gene>
<sequence>MLGAIAYTGNKQSLLPELKSHFPKYNRFVDLFCGGLSVSLNVNGPVLANDIQEPIIEMYKRLINVSWDDVLKVIKQYKLSKTSKEEFLKLREDYNKTRDPLLLYVLHFHGFSNMIRINDKGNFTTPFGKRTINKNSEKQYNHFKQNCDKIIFSSLHFKDVKILDGDFVYVDPPYLITVADYNKFWSEDEEKDLLNLLDSLNDRGIKFGQSNVLEHHGKENTLLKEWSKKYNVKHLNKKYVFNIYHSKEKNGTDEVYIFN</sequence>
<reference key="1">
    <citation type="journal article" date="1984" name="EMBO J.">
        <title>Regulation of a new bacteriophage T4 gene, 69, that spans an origin of DNA replication.</title>
        <authorList>
            <person name="McDonald P.M."/>
            <person name="Mosig G."/>
        </authorList>
    </citation>
    <scope>NUCLEOTIDE SEQUENCE [GENOMIC DNA]</scope>
</reference>
<reference key="2">
    <citation type="journal article" date="1989" name="Nucleic Acids Res.">
        <title>Single amino acid changes that alter the DNA sequence specificity of the DNA-[N6-adenine] methyltransferase (Dam) of bacteriophage T4.</title>
        <authorList>
            <person name="Miner Z."/>
            <person name="Schlagman S.L."/>
            <person name="Hattman S."/>
        </authorList>
    </citation>
    <scope>NUCLEOTIDE SEQUENCE [GENOMIC DNA]</scope>
    <scope>FUNCTION</scope>
    <scope>CATALYTIC ACTIVITY</scope>
    <scope>MUTANT DAMH</scope>
    <scope>MUTAGENESIS OF PRO-126 AND PHE-127</scope>
</reference>
<reference key="3">
    <citation type="journal article" date="2003" name="Microbiol. Mol. Biol. Rev.">
        <title>Bacteriophage T4 genome.</title>
        <authorList>
            <person name="Miller E.S."/>
            <person name="Kutter E."/>
            <person name="Mosig G."/>
            <person name="Arisaka F."/>
            <person name="Kunisawa T."/>
            <person name="Ruger W."/>
        </authorList>
    </citation>
    <scope>NUCLEOTIDE SEQUENCE [LARGE SCALE GENOMIC DNA]</scope>
</reference>
<reference key="4">
    <citation type="journal article" date="1995" name="J. Biol. Chem.">
        <title>Phage T4 DNA [N6-adenine]methyltransferase. Overexpression, purification, and characterization.</title>
        <authorList>
            <person name="Kossykh V.G."/>
            <person name="Schlagman S.L."/>
            <person name="Hattman S."/>
        </authorList>
    </citation>
    <scope>SUBUNIT</scope>
    <scope>BIOPHYSICOCHEMICAL PROPERTIES</scope>
    <scope>CATALYTIC ACTIVITY</scope>
</reference>
<reference key="5">
    <citation type="journal article" date="2003" name="Nucleic Acids Res.">
        <title>A nomenclature for restriction enzymes, DNA methyltransferases, homing endonucleases and their genes.</title>
        <authorList>
            <person name="Roberts R.J."/>
            <person name="Belfort M."/>
            <person name="Bestor T."/>
            <person name="Bhagwat A.S."/>
            <person name="Bickle T.A."/>
            <person name="Bitinaite J."/>
            <person name="Blumenthal R.M."/>
            <person name="Degtyarev S.K."/>
            <person name="Dryden D.T."/>
            <person name="Dybvig K."/>
            <person name="Firman K."/>
            <person name="Gromova E.S."/>
            <person name="Gumport R.I."/>
            <person name="Halford S.E."/>
            <person name="Hattman S."/>
            <person name="Heitman J."/>
            <person name="Hornby D.P."/>
            <person name="Janulaitis A."/>
            <person name="Jeltsch A."/>
            <person name="Josephsen J."/>
            <person name="Kiss A."/>
            <person name="Klaenhammer T.R."/>
            <person name="Kobayashi I."/>
            <person name="Kong H."/>
            <person name="Krueger D.H."/>
            <person name="Lacks S."/>
            <person name="Marinus M.G."/>
            <person name="Miyahara M."/>
            <person name="Morgan R.D."/>
            <person name="Murray N.E."/>
            <person name="Nagaraja V."/>
            <person name="Piekarowicz A."/>
            <person name="Pingoud A."/>
            <person name="Raleigh E."/>
            <person name="Rao D.N."/>
            <person name="Reich N."/>
            <person name="Repin V.E."/>
            <person name="Selker E.U."/>
            <person name="Shaw P.C."/>
            <person name="Stein D.C."/>
            <person name="Stoddard B.L."/>
            <person name="Szybalski W."/>
            <person name="Trautner T.A."/>
            <person name="Van Etten J.L."/>
            <person name="Vitor J.M."/>
            <person name="Wilson G.G."/>
            <person name="Xu S.Y."/>
        </authorList>
    </citation>
    <scope>NOMENCLATURE</scope>
    <scope>SUBTYPE</scope>
</reference>
<reference key="6">
    <citation type="journal article" date="2003" name="J. Biol. Chem.">
        <title>Bacteriophage T4 Dam DNA-(N6-adenine)-methyltransferase. Processivity and orientation to the methylation target.</title>
        <authorList>
            <person name="Zinoviev V.V."/>
            <person name="Evdokimov A.A."/>
            <person name="Malygin E.G."/>
            <person name="Schlagman S.L."/>
            <person name="Hattman S."/>
        </authorList>
    </citation>
    <scope>FUNCTION</scope>
</reference>
<reference evidence="10 11" key="7">
    <citation type="journal article" date="2003" name="Nat. Struct. Biol.">
        <title>Structure of the bacteriophage T4 DNA adenine methyltransferase.</title>
        <authorList>
            <person name="Yang Z."/>
            <person name="Horton J.R."/>
            <person name="Zhou L."/>
            <person name="Zhang X.J."/>
            <person name="Dong A."/>
            <person name="Zhang X."/>
            <person name="Schlagman S.L."/>
            <person name="Kossykh V."/>
            <person name="Hattman S."/>
            <person name="Cheng X."/>
        </authorList>
    </citation>
    <scope>X-RAY CRYSTALLOGRAPHY (2.3 ANGSTROMS) IN COMPLEX WITH S-ADENOSYL-L-HOMOCYSTEINE</scope>
    <scope>SUBUNIT</scope>
</reference>
<reference evidence="12 13 14" key="8">
    <citation type="journal article" date="2005" name="Cell">
        <title>Transition from nonspecific to specific DNA interactions along the substrate-recognition pathway of dam methyltransferase.</title>
        <authorList>
            <person name="Horton J.R."/>
            <person name="Liebert K."/>
            <person name="Hattman S."/>
            <person name="Jeltsch A."/>
            <person name="Cheng X."/>
        </authorList>
    </citation>
    <scope>X-RAY CRYSTALLOGRAPHY (2.29 ANGSTROMS) IN COMPLEX WITH S-ADENOSYL-L-HOMOCYSTEINE</scope>
</reference>
<protein>
    <recommendedName>
        <fullName>DNA adenine methylase</fullName>
        <ecNumber evidence="3 4">2.1.1.72</ecNumber>
    </recommendedName>
    <alternativeName>
        <fullName evidence="5">DNA-(N(6)-adenine)-methyltransferase</fullName>
    </alternativeName>
    <alternativeName>
        <fullName>Deoxyadenosyl-methyltransferase</fullName>
    </alternativeName>
    <alternativeName>
        <fullName evidence="6">Orphan methyltransferase M.EcoT4Dam</fullName>
        <shortName evidence="6">M.EcoT4Dam</shortName>
    </alternativeName>
</protein>
<feature type="chain" id="PRO_0000087990" description="DNA adenine methylase">
    <location>
        <begin position="1"/>
        <end position="259"/>
    </location>
</feature>
<feature type="binding site" evidence="10 11 12 13">
    <location>
        <position position="7"/>
    </location>
    <ligand>
        <name>S-adenosyl-L-methionine</name>
        <dbReference type="ChEBI" id="CHEBI:59789"/>
    </ligand>
</feature>
<feature type="binding site" evidence="10 12 13">
    <location>
        <position position="11"/>
    </location>
    <ligand>
        <name>S-adenosyl-L-methionine</name>
        <dbReference type="ChEBI" id="CHEBI:59789"/>
    </ligand>
</feature>
<feature type="binding site" evidence="10 11 12 13">
    <location>
        <begin position="32"/>
        <end position="37"/>
    </location>
    <ligand>
        <name>S-adenosyl-L-methionine</name>
        <dbReference type="ChEBI" id="CHEBI:59789"/>
    </ligand>
</feature>
<feature type="binding site" evidence="10 11 12 13">
    <location>
        <position position="50"/>
    </location>
    <ligand>
        <name>S-adenosyl-L-methionine</name>
        <dbReference type="ChEBI" id="CHEBI:59789"/>
    </ligand>
</feature>
<feature type="binding site" evidence="10 12 13">
    <location>
        <begin position="156"/>
        <end position="157"/>
    </location>
    <ligand>
        <name>S-adenosyl-L-methionine</name>
        <dbReference type="ChEBI" id="CHEBI:59789"/>
    </ligand>
</feature>
<feature type="binding site" evidence="10 12 13">
    <location>
        <position position="171"/>
    </location>
    <ligand>
        <name>S-adenosyl-L-methionine</name>
        <dbReference type="ChEBI" id="CHEBI:59789"/>
    </ligand>
</feature>
<feature type="binding site" evidence="10 11 12 13">
    <location>
        <position position="181"/>
    </location>
    <ligand>
        <name>S-adenosyl-L-methionine</name>
        <dbReference type="ChEBI" id="CHEBI:59789"/>
    </ligand>
</feature>
<feature type="mutagenesis site" description="Hypermethylates DNA." evidence="3">
    <original>P</original>
    <variation>A</variation>
    <variation>C</variation>
    <variation>G</variation>
    <location>
        <position position="126"/>
    </location>
</feature>
<feature type="mutagenesis site" description="Loss of methylase activity." evidence="3">
    <original>P</original>
    <variation>E</variation>
    <variation>F</variation>
    <variation>H</variation>
    <location>
        <position position="126"/>
    </location>
</feature>
<feature type="mutagenesis site" description="In damh; hypermethylating mutant." evidence="3">
    <original>P</original>
    <variation>S</variation>
    <location>
        <position position="126"/>
    </location>
</feature>
<feature type="mutagenesis site" description="No longer methylates hmC-DNA-containing DNA." evidence="3">
    <original>F</original>
    <variation>V</variation>
    <location>
        <position position="127"/>
    </location>
</feature>
<feature type="sequence conflict" description="In Ref. 2; X17641." evidence="8" ref="2">
    <original>QY</original>
    <variation>RF</variation>
    <location>
        <begin position="139"/>
        <end position="140"/>
    </location>
</feature>
<feature type="sequence conflict" description="In Ref. 2; X17641." evidence="8" ref="2">
    <original>Q</original>
    <variation>L</variation>
    <location>
        <position position="209"/>
    </location>
</feature>
<feature type="turn" evidence="15">
    <location>
        <begin position="12"/>
        <end position="14"/>
    </location>
</feature>
<feature type="helix" evidence="15">
    <location>
        <begin position="15"/>
        <end position="20"/>
    </location>
</feature>
<feature type="strand" evidence="15">
    <location>
        <begin position="26"/>
        <end position="30"/>
    </location>
</feature>
<feature type="helix" evidence="15">
    <location>
        <begin position="39"/>
        <end position="41"/>
    </location>
</feature>
<feature type="strand" evidence="15">
    <location>
        <begin position="44"/>
        <end position="49"/>
    </location>
</feature>
<feature type="helix" evidence="15">
    <location>
        <begin position="53"/>
        <end position="62"/>
    </location>
</feature>
<feature type="helix" evidence="15">
    <location>
        <begin position="67"/>
        <end position="76"/>
    </location>
</feature>
<feature type="helix" evidence="15">
    <location>
        <begin position="84"/>
        <end position="97"/>
    </location>
</feature>
<feature type="helix" evidence="15">
    <location>
        <begin position="100"/>
        <end position="107"/>
    </location>
</feature>
<feature type="helix" evidence="15">
    <location>
        <begin position="111"/>
        <end position="113"/>
    </location>
</feature>
<feature type="helix" evidence="15">
    <location>
        <begin position="136"/>
        <end position="146"/>
    </location>
</feature>
<feature type="helix" evidence="15">
    <location>
        <begin position="147"/>
        <end position="149"/>
    </location>
</feature>
<feature type="strand" evidence="15">
    <location>
        <begin position="150"/>
        <end position="153"/>
    </location>
</feature>
<feature type="helix" evidence="15">
    <location>
        <begin position="157"/>
        <end position="159"/>
    </location>
</feature>
<feature type="strand" evidence="15">
    <location>
        <begin position="166"/>
        <end position="170"/>
    </location>
</feature>
<feature type="strand" evidence="16">
    <location>
        <begin position="175"/>
        <end position="177"/>
    </location>
</feature>
<feature type="helix" evidence="15">
    <location>
        <begin position="180"/>
        <end position="184"/>
    </location>
</feature>
<feature type="helix" evidence="15">
    <location>
        <begin position="187"/>
        <end position="201"/>
    </location>
</feature>
<feature type="turn" evidence="15">
    <location>
        <begin position="202"/>
        <end position="204"/>
    </location>
</feature>
<feature type="strand" evidence="15">
    <location>
        <begin position="206"/>
        <end position="215"/>
    </location>
</feature>
<feature type="helix" evidence="15">
    <location>
        <begin position="221"/>
        <end position="227"/>
    </location>
</feature>
<feature type="strand" evidence="15">
    <location>
        <begin position="230"/>
        <end position="234"/>
    </location>
</feature>
<feature type="helix" evidence="15">
    <location>
        <begin position="237"/>
        <end position="242"/>
    </location>
</feature>
<feature type="strand" evidence="15">
    <location>
        <begin position="254"/>
        <end position="258"/>
    </location>
</feature>
<comment type="function">
    <text evidence="1 3 6 8 9">An alpha subtype methylase, recognizes the double-stranded sequence 5'-GATC-3' and methylates A-2. Also acts on 5-hydroxymethylcytosine (hmC)-containing DNA, the normal base in this virus (PubMed:12654995, PubMed:2510127). May prevent degradation of viral DNA by the host restriction-modification antiviral defense system (Probable).</text>
</comment>
<comment type="catalytic activity">
    <reaction evidence="3 4">
        <text>a 2'-deoxyadenosine in DNA + S-adenosyl-L-methionine = an N(6)-methyl-2'-deoxyadenosine in DNA + S-adenosyl-L-homocysteine + H(+)</text>
        <dbReference type="Rhea" id="RHEA:15197"/>
        <dbReference type="Rhea" id="RHEA-COMP:12418"/>
        <dbReference type="Rhea" id="RHEA-COMP:12419"/>
        <dbReference type="ChEBI" id="CHEBI:15378"/>
        <dbReference type="ChEBI" id="CHEBI:57856"/>
        <dbReference type="ChEBI" id="CHEBI:59789"/>
        <dbReference type="ChEBI" id="CHEBI:90615"/>
        <dbReference type="ChEBI" id="CHEBI:90616"/>
        <dbReference type="EC" id="2.1.1.72"/>
    </reaction>
</comment>
<comment type="biophysicochemical properties">
    <kinetics>
        <KM evidence="4">0.1 uM for S-adenosylmethionine</KM>
    </kinetics>
    <phDependence>
        <text evidence="4">Optimum pH is 7.0-8.5.</text>
    </phDependence>
</comment>
<comment type="subunit">
    <text evidence="2 4">Monomer.</text>
</comment>
<comment type="similarity">
    <text evidence="8">Belongs to the N(4)/N(6)-methyltransferase family.</text>
</comment>
<name>DMA_BPT4</name>
<keyword id="KW-0002">3D-structure</keyword>
<keyword id="KW-0235">DNA replication</keyword>
<keyword id="KW-0238">DNA-binding</keyword>
<keyword id="KW-0945">Host-virus interaction</keyword>
<keyword id="KW-1090">Inhibition of host innate immune response by virus</keyword>
<keyword id="KW-0489">Methyltransferase</keyword>
<keyword id="KW-1185">Reference proteome</keyword>
<keyword id="KW-1258">Restriction-modification system evasion by virus</keyword>
<keyword id="KW-0949">S-adenosyl-L-methionine</keyword>
<keyword id="KW-0808">Transferase</keyword>
<keyword id="KW-0899">Viral immunoevasion</keyword>
<evidence type="ECO:0000269" key="1">
    <source>
    </source>
</evidence>
<evidence type="ECO:0000269" key="2">
    <source>
    </source>
</evidence>
<evidence type="ECO:0000269" key="3">
    <source>
    </source>
</evidence>
<evidence type="ECO:0000269" key="4">
    <source>
    </source>
</evidence>
<evidence type="ECO:0000303" key="5">
    <source>
    </source>
</evidence>
<evidence type="ECO:0000303" key="6">
    <source>
    </source>
</evidence>
<evidence type="ECO:0000303" key="7">
    <source>
    </source>
</evidence>
<evidence type="ECO:0000305" key="8"/>
<evidence type="ECO:0000305" key="9">
    <source>
    </source>
</evidence>
<evidence type="ECO:0007744" key="10">
    <source>
        <dbReference type="PDB" id="1Q0S"/>
    </source>
</evidence>
<evidence type="ECO:0007744" key="11">
    <source>
        <dbReference type="PDB" id="1Q0T"/>
    </source>
</evidence>
<evidence type="ECO:0007744" key="12">
    <source>
        <dbReference type="PDB" id="1YF3"/>
    </source>
</evidence>
<evidence type="ECO:0007744" key="13">
    <source>
        <dbReference type="PDB" id="1YFJ"/>
    </source>
</evidence>
<evidence type="ECO:0007744" key="14">
    <source>
        <dbReference type="PDB" id="1YFL"/>
    </source>
</evidence>
<evidence type="ECO:0007829" key="15">
    <source>
        <dbReference type="PDB" id="1YF3"/>
    </source>
</evidence>
<evidence type="ECO:0007829" key="16">
    <source>
        <dbReference type="PDB" id="1YFL"/>
    </source>
</evidence>
<dbReference type="EC" id="2.1.1.72" evidence="3 4"/>
<dbReference type="EMBL" id="X01416">
    <property type="protein sequence ID" value="CAA25660.1"/>
    <property type="molecule type" value="Genomic_DNA"/>
</dbReference>
<dbReference type="EMBL" id="X17641">
    <property type="status" value="NOT_ANNOTATED_CDS"/>
    <property type="molecule type" value="Genomic_DNA"/>
</dbReference>
<dbReference type="EMBL" id="K03113">
    <property type="protein sequence ID" value="AAA32555.1"/>
    <property type="molecule type" value="Genomic_DNA"/>
</dbReference>
<dbReference type="EMBL" id="AF158101">
    <property type="protein sequence ID" value="AAD42553.1"/>
    <property type="molecule type" value="Genomic_DNA"/>
</dbReference>
<dbReference type="PIR" id="A00554">
    <property type="entry name" value="XYBPT4"/>
</dbReference>
<dbReference type="RefSeq" id="NP_049647.1">
    <property type="nucleotide sequence ID" value="NC_000866.4"/>
</dbReference>
<dbReference type="PDB" id="1Q0S">
    <property type="method" value="X-ray"/>
    <property type="resolution" value="2.30 A"/>
    <property type="chains" value="A=1-259"/>
</dbReference>
<dbReference type="PDB" id="1Q0T">
    <property type="method" value="X-ray"/>
    <property type="resolution" value="3.10 A"/>
    <property type="chains" value="A/B=1-259"/>
</dbReference>
<dbReference type="PDB" id="1YF3">
    <property type="method" value="X-ray"/>
    <property type="resolution" value="2.29 A"/>
    <property type="chains" value="A/B=1-259"/>
</dbReference>
<dbReference type="PDB" id="1YFJ">
    <property type="method" value="X-ray"/>
    <property type="resolution" value="2.69 A"/>
    <property type="chains" value="A/B/C/D/E/F=1-259"/>
</dbReference>
<dbReference type="PDB" id="1YFL">
    <property type="method" value="X-ray"/>
    <property type="resolution" value="3.09 A"/>
    <property type="chains" value="A/B/D/E=1-259"/>
</dbReference>
<dbReference type="PDBsum" id="1Q0S"/>
<dbReference type="PDBsum" id="1Q0T"/>
<dbReference type="PDBsum" id="1YF3"/>
<dbReference type="PDBsum" id="1YFJ"/>
<dbReference type="PDBsum" id="1YFL"/>
<dbReference type="SMR" id="P04392"/>
<dbReference type="DrugBank" id="DB01752">
    <property type="generic name" value="S-adenosyl-L-homocysteine"/>
</dbReference>
<dbReference type="REBASE" id="2837">
    <property type="entry name" value="M.EcoT4Dam"/>
</dbReference>
<dbReference type="GeneID" id="1258548"/>
<dbReference type="KEGG" id="vg:1258548"/>
<dbReference type="OrthoDB" id="8399at10239"/>
<dbReference type="BRENDA" id="2.1.1.72">
    <property type="organism ID" value="732"/>
</dbReference>
<dbReference type="EvolutionaryTrace" id="P04392"/>
<dbReference type="Proteomes" id="UP000009087">
    <property type="component" value="Segment"/>
</dbReference>
<dbReference type="GO" id="GO:0009008">
    <property type="term" value="F:DNA-methyltransferase activity"/>
    <property type="evidence" value="ECO:0000314"/>
    <property type="project" value="CACAO"/>
</dbReference>
<dbReference type="GO" id="GO:1904047">
    <property type="term" value="F:S-adenosyl-L-methionine binding"/>
    <property type="evidence" value="ECO:0007669"/>
    <property type="project" value="TreeGrafter"/>
</dbReference>
<dbReference type="GO" id="GO:0043565">
    <property type="term" value="F:sequence-specific DNA binding"/>
    <property type="evidence" value="ECO:0007669"/>
    <property type="project" value="TreeGrafter"/>
</dbReference>
<dbReference type="GO" id="GO:0009007">
    <property type="term" value="F:site-specific DNA-methyltransferase (adenine-specific) activity"/>
    <property type="evidence" value="ECO:0007669"/>
    <property type="project" value="UniProtKB-EC"/>
</dbReference>
<dbReference type="GO" id="GO:0006260">
    <property type="term" value="P:DNA replication"/>
    <property type="evidence" value="ECO:0007669"/>
    <property type="project" value="UniProtKB-KW"/>
</dbReference>
<dbReference type="GO" id="GO:0009307">
    <property type="term" value="P:DNA restriction-modification system"/>
    <property type="evidence" value="ECO:0007669"/>
    <property type="project" value="InterPro"/>
</dbReference>
<dbReference type="GO" id="GO:0032259">
    <property type="term" value="P:methylation"/>
    <property type="evidence" value="ECO:0000315"/>
    <property type="project" value="CACAO"/>
</dbReference>
<dbReference type="GO" id="GO:0006298">
    <property type="term" value="P:mismatch repair"/>
    <property type="evidence" value="ECO:0007669"/>
    <property type="project" value="TreeGrafter"/>
</dbReference>
<dbReference type="GO" id="GO:0099018">
    <property type="term" value="P:symbiont-mediated evasion of host restriction-modification system"/>
    <property type="evidence" value="ECO:0007669"/>
    <property type="project" value="UniProtKB-KW"/>
</dbReference>
<dbReference type="GO" id="GO:0052170">
    <property type="term" value="P:symbiont-mediated suppression of host innate immune response"/>
    <property type="evidence" value="ECO:0007669"/>
    <property type="project" value="UniProtKB-KW"/>
</dbReference>
<dbReference type="Gene3D" id="1.10.1020.10">
    <property type="entry name" value="Adenine-specific Methyltransferase, Domain 2"/>
    <property type="match status" value="1"/>
</dbReference>
<dbReference type="Gene3D" id="3.40.50.150">
    <property type="entry name" value="Vaccinia Virus protein VP39"/>
    <property type="match status" value="1"/>
</dbReference>
<dbReference type="InterPro" id="IPR023095">
    <property type="entry name" value="Ade_MeTrfase_dom_2"/>
</dbReference>
<dbReference type="InterPro" id="IPR002052">
    <property type="entry name" value="DNA_methylase_N6_adenine_CS"/>
</dbReference>
<dbReference type="InterPro" id="IPR012263">
    <property type="entry name" value="M_m6A_EcoRV"/>
</dbReference>
<dbReference type="InterPro" id="IPR012327">
    <property type="entry name" value="MeTrfase_D12"/>
</dbReference>
<dbReference type="InterPro" id="IPR029063">
    <property type="entry name" value="SAM-dependent_MTases_sf"/>
</dbReference>
<dbReference type="NCBIfam" id="TIGR00571">
    <property type="entry name" value="dam"/>
    <property type="match status" value="1"/>
</dbReference>
<dbReference type="PANTHER" id="PTHR30481">
    <property type="entry name" value="DNA ADENINE METHYLASE"/>
    <property type="match status" value="1"/>
</dbReference>
<dbReference type="PANTHER" id="PTHR30481:SF3">
    <property type="entry name" value="DNA ADENINE METHYLASE"/>
    <property type="match status" value="1"/>
</dbReference>
<dbReference type="Pfam" id="PF02086">
    <property type="entry name" value="MethyltransfD12"/>
    <property type="match status" value="1"/>
</dbReference>
<dbReference type="PIRSF" id="PIRSF000398">
    <property type="entry name" value="M_m6A_EcoRV"/>
    <property type="match status" value="1"/>
</dbReference>
<dbReference type="PRINTS" id="PR00505">
    <property type="entry name" value="D12N6MTFRASE"/>
</dbReference>
<dbReference type="SUPFAM" id="SSF53335">
    <property type="entry name" value="S-adenosyl-L-methionine-dependent methyltransferases"/>
    <property type="match status" value="1"/>
</dbReference>
<dbReference type="PROSITE" id="PS00092">
    <property type="entry name" value="N6_MTASE"/>
    <property type="match status" value="1"/>
</dbReference>
<organism>
    <name type="scientific">Enterobacteria phage T4</name>
    <name type="common">Bacteriophage T4</name>
    <dbReference type="NCBI Taxonomy" id="10665"/>
    <lineage>
        <taxon>Viruses</taxon>
        <taxon>Duplodnaviria</taxon>
        <taxon>Heunggongvirae</taxon>
        <taxon>Uroviricota</taxon>
        <taxon>Caudoviricetes</taxon>
        <taxon>Straboviridae</taxon>
        <taxon>Tevenvirinae</taxon>
        <taxon>Tequatrovirus</taxon>
    </lineage>
</organism>
<organismHost>
    <name type="scientific">Escherichia coli</name>
    <dbReference type="NCBI Taxonomy" id="562"/>
</organismHost>